<feature type="signal peptide" evidence="1">
    <location>
        <begin position="1"/>
        <end position="17"/>
    </location>
</feature>
<feature type="chain" id="PRO_0000382937" description="Putative subtilisin-like proteinase 2">
    <location>
        <begin position="18"/>
        <end position="535"/>
    </location>
</feature>
<feature type="transmembrane region" description="Helical" evidence="1">
    <location>
        <begin position="489"/>
        <end position="509"/>
    </location>
</feature>
<feature type="domain" description="Peptidase S8" evidence="2">
    <location>
        <begin position="221"/>
        <end position="475"/>
    </location>
</feature>
<feature type="active site" description="Charge relay system" evidence="2">
    <location>
        <position position="255"/>
    </location>
</feature>
<feature type="active site" description="Charge relay system" evidence="2">
    <location>
        <position position="277"/>
    </location>
</feature>
<feature type="active site" description="Charge relay system" evidence="2">
    <location>
        <position position="420"/>
    </location>
</feature>
<feature type="disulfide bond" evidence="1">
    <location>
        <begin position="369"/>
        <end position="400"/>
    </location>
</feature>
<evidence type="ECO:0000255" key="1"/>
<evidence type="ECO:0000255" key="2">
    <source>
        <dbReference type="PROSITE-ProRule" id="PRU01240"/>
    </source>
</evidence>
<evidence type="ECO:0000269" key="3">
    <source>
    </source>
</evidence>
<evidence type="ECO:0000305" key="4"/>
<comment type="function">
    <text>May be involved in the degradation of proteins for nutrient acquisition or possess a regulatory function by proteolytic activation of proproteins.</text>
</comment>
<comment type="subcellular location">
    <subcellularLocation>
        <location evidence="4">Membrane</location>
        <topology evidence="4">Single-pass membrane protein</topology>
    </subcellularLocation>
</comment>
<comment type="developmental stage">
    <text evidence="3">Expression is low in meronts, but becomes induced in sporonts and spores.</text>
</comment>
<comment type="similarity">
    <text evidence="4">Belongs to the peptidase S8 family.</text>
</comment>
<keyword id="KW-1015">Disulfide bond</keyword>
<keyword id="KW-0378">Hydrolase</keyword>
<keyword id="KW-0472">Membrane</keyword>
<keyword id="KW-0645">Protease</keyword>
<keyword id="KW-1185">Reference proteome</keyword>
<keyword id="KW-0720">Serine protease</keyword>
<keyword id="KW-0732">Signal</keyword>
<keyword id="KW-0812">Transmembrane</keyword>
<keyword id="KW-1133">Transmembrane helix</keyword>
<gene>
    <name type="primary">SPL2</name>
    <name type="ordered locus">ECU03_1180</name>
</gene>
<accession>Q8SS86</accession>
<reference key="1">
    <citation type="journal article" date="2001" name="Nature">
        <title>Genome sequence and gene compaction of the eukaryote parasite Encephalitozoon cuniculi.</title>
        <authorList>
            <person name="Katinka M.D."/>
            <person name="Duprat S."/>
            <person name="Cornillot E."/>
            <person name="Metenier G."/>
            <person name="Thomarat F."/>
            <person name="Prensier G."/>
            <person name="Barbe V."/>
            <person name="Peyretaillade E."/>
            <person name="Brottier P."/>
            <person name="Wincker P."/>
            <person name="Delbac F."/>
            <person name="El Alaoui H."/>
            <person name="Peyret P."/>
            <person name="Saurin W."/>
            <person name="Gouy M."/>
            <person name="Weissenbach J."/>
            <person name="Vivares C.P."/>
        </authorList>
    </citation>
    <scope>NUCLEOTIDE SEQUENCE [LARGE SCALE GENOMIC DNA]</scope>
    <source>
        <strain>GB-M1</strain>
    </source>
</reference>
<reference key="2">
    <citation type="journal article" date="2006" name="J. Eukaryot. Microbiol.">
        <title>Identification of novel developmentally regulated genes in Encephalitozoon cuniculi: an endochitinase, a chitin-synthase, and two subtilisin-like proteases are induced during meront-to-sporont differentiation.</title>
        <authorList>
            <person name="Roennebaeumer K."/>
            <person name="Wagener J."/>
            <person name="Gross U."/>
            <person name="Bohne W."/>
        </authorList>
    </citation>
    <scope>DEVELOPMENTAL STAGE</scope>
</reference>
<proteinExistence type="evidence at transcript level"/>
<protein>
    <recommendedName>
        <fullName>Putative subtilisin-like proteinase 2</fullName>
        <ecNumber>3.4.21.-</ecNumber>
    </recommendedName>
</protein>
<organism>
    <name type="scientific">Encephalitozoon cuniculi (strain GB-M1)</name>
    <name type="common">Microsporidian parasite</name>
    <dbReference type="NCBI Taxonomy" id="284813"/>
    <lineage>
        <taxon>Eukaryota</taxon>
        <taxon>Fungi</taxon>
        <taxon>Fungi incertae sedis</taxon>
        <taxon>Microsporidia</taxon>
        <taxon>Unikaryonidae</taxon>
        <taxon>Encephalitozoon</taxon>
    </lineage>
</organism>
<dbReference type="EC" id="3.4.21.-"/>
<dbReference type="EMBL" id="AL590443">
    <property type="protein sequence ID" value="CAD26262.1"/>
    <property type="molecule type" value="Genomic_DNA"/>
</dbReference>
<dbReference type="RefSeq" id="NP_597627.1">
    <property type="nucleotide sequence ID" value="NM_001040991.1"/>
</dbReference>
<dbReference type="SMR" id="Q8SS86"/>
<dbReference type="STRING" id="284813.Q8SS86"/>
<dbReference type="GeneID" id="858789"/>
<dbReference type="KEGG" id="ecu:ECU03_1180"/>
<dbReference type="VEuPathDB" id="MicrosporidiaDB:ECU03_1180"/>
<dbReference type="HOGENOM" id="CLU_038703_0_0_1"/>
<dbReference type="InParanoid" id="Q8SS86"/>
<dbReference type="OMA" id="HYENTIF"/>
<dbReference type="OrthoDB" id="206201at2759"/>
<dbReference type="Proteomes" id="UP000000819">
    <property type="component" value="Chromosome III"/>
</dbReference>
<dbReference type="GO" id="GO:0005615">
    <property type="term" value="C:extracellular space"/>
    <property type="evidence" value="ECO:0007669"/>
    <property type="project" value="TreeGrafter"/>
</dbReference>
<dbReference type="GO" id="GO:0016020">
    <property type="term" value="C:membrane"/>
    <property type="evidence" value="ECO:0007669"/>
    <property type="project" value="UniProtKB-SubCell"/>
</dbReference>
<dbReference type="GO" id="GO:0004252">
    <property type="term" value="F:serine-type endopeptidase activity"/>
    <property type="evidence" value="ECO:0007669"/>
    <property type="project" value="InterPro"/>
</dbReference>
<dbReference type="GO" id="GO:0006508">
    <property type="term" value="P:proteolysis"/>
    <property type="evidence" value="ECO:0007669"/>
    <property type="project" value="UniProtKB-KW"/>
</dbReference>
<dbReference type="CDD" id="cd04077">
    <property type="entry name" value="Peptidases_S8_PCSK9_ProteinaseK_like"/>
    <property type="match status" value="1"/>
</dbReference>
<dbReference type="Gene3D" id="3.40.50.200">
    <property type="entry name" value="Peptidase S8/S53 domain"/>
    <property type="match status" value="1"/>
</dbReference>
<dbReference type="InterPro" id="IPR034193">
    <property type="entry name" value="PCSK9_ProteinaseK-like"/>
</dbReference>
<dbReference type="InterPro" id="IPR000209">
    <property type="entry name" value="Peptidase_S8/S53_dom"/>
</dbReference>
<dbReference type="InterPro" id="IPR036852">
    <property type="entry name" value="Peptidase_S8/S53_dom_sf"/>
</dbReference>
<dbReference type="InterPro" id="IPR050131">
    <property type="entry name" value="Peptidase_S8_subtilisin-like"/>
</dbReference>
<dbReference type="PANTHER" id="PTHR43806:SF11">
    <property type="entry name" value="CEREVISIN-RELATED"/>
    <property type="match status" value="1"/>
</dbReference>
<dbReference type="PANTHER" id="PTHR43806">
    <property type="entry name" value="PEPTIDASE S8"/>
    <property type="match status" value="1"/>
</dbReference>
<dbReference type="Pfam" id="PF00082">
    <property type="entry name" value="Peptidase_S8"/>
    <property type="match status" value="1"/>
</dbReference>
<dbReference type="SUPFAM" id="SSF52743">
    <property type="entry name" value="Subtilisin-like"/>
    <property type="match status" value="1"/>
</dbReference>
<dbReference type="PROSITE" id="PS51892">
    <property type="entry name" value="SUBTILASE"/>
    <property type="match status" value="1"/>
</dbReference>
<sequence>MFFVGVAVLAALQSVWGNGGLETNEVAGMDRLGVESQKENPPGILLRKDDGMCEARKPMDMSPGEVQTETKTVVKEIVVEIEEPREGIQEVLPVVQYEGQAKVSAGNDLLKPSCGVSSGFTSSAERCYVLTKDAHDGDTSKMISLVESLSGRVKRQYTKNITGVSFCSSHSDVLRKVDDAGMHVEEDKIYTVSMLQNNIPNYMYLMRHYENTIFNNYFYDNWIFRVLQIKRVMTKFLGSYEYYHTGKGVNIFLLDTAISSMDGACNLSGRLEACNAHGNVMAELLVGKTNGFAKDSRLSVLDVVDCDGKVALSEMIHGLEGLRESGGPSILVFGVSGPYSASLNSAVDRISSRGTVVVSPAGNSHDQSCNYSPGSSKSVINVGSVDKHAGISRFSNHGDCIRMFAPGEDVLQDSSLTGTSLSAAIVASSIALFLETSPRAAFPQIWGYLNQNSFWNSRGSYSVLKIPRLGCKGRIRGSIFRLGGLYEDIVPLVFVVLITSALLYLLLIGIRRFRRRREQELHDEDVLFDPPVDRF</sequence>
<name>SPL2_ENCCU</name>